<organism>
    <name type="scientific">Mycoplasma pneumoniae (strain ATCC 29342 / M129 / Subtype 1)</name>
    <name type="common">Mycoplasmoides pneumoniae</name>
    <dbReference type="NCBI Taxonomy" id="272634"/>
    <lineage>
        <taxon>Bacteria</taxon>
        <taxon>Bacillati</taxon>
        <taxon>Mycoplasmatota</taxon>
        <taxon>Mycoplasmoidales</taxon>
        <taxon>Mycoplasmoidaceae</taxon>
        <taxon>Mycoplasmoides</taxon>
    </lineage>
</organism>
<dbReference type="EC" id="2.7.7.9"/>
<dbReference type="EMBL" id="U00089">
    <property type="protein sequence ID" value="AAB95823.1"/>
    <property type="molecule type" value="Genomic_DNA"/>
</dbReference>
<dbReference type="PIR" id="S73501">
    <property type="entry name" value="S73501"/>
</dbReference>
<dbReference type="RefSeq" id="NP_110356.1">
    <property type="nucleotide sequence ID" value="NC_000912.1"/>
</dbReference>
<dbReference type="RefSeq" id="WP_010875024.1">
    <property type="nucleotide sequence ID" value="NZ_OU342337.1"/>
</dbReference>
<dbReference type="SMR" id="P75124"/>
<dbReference type="STRING" id="272634.MPN_667"/>
<dbReference type="EnsemblBacteria" id="AAB95823">
    <property type="protein sequence ID" value="AAB95823"/>
    <property type="gene ID" value="MPN_667"/>
</dbReference>
<dbReference type="KEGG" id="mpn:MPN_667"/>
<dbReference type="PATRIC" id="fig|272634.6.peg.732"/>
<dbReference type="HOGENOM" id="CLU_029499_1_0_14"/>
<dbReference type="OrthoDB" id="9803871at2"/>
<dbReference type="BioCyc" id="MetaCyc:MONOMER-642"/>
<dbReference type="BioCyc" id="MPNE272634:G1GJ3-1069-MONOMER"/>
<dbReference type="Proteomes" id="UP000000808">
    <property type="component" value="Chromosome"/>
</dbReference>
<dbReference type="GO" id="GO:0003983">
    <property type="term" value="F:UTP:glucose-1-phosphate uridylyltransferase activity"/>
    <property type="evidence" value="ECO:0007669"/>
    <property type="project" value="UniProtKB-EC"/>
</dbReference>
<dbReference type="GO" id="GO:0009058">
    <property type="term" value="P:biosynthetic process"/>
    <property type="evidence" value="ECO:0007669"/>
    <property type="project" value="InterPro"/>
</dbReference>
<dbReference type="GO" id="GO:0006011">
    <property type="term" value="P:UDP-alpha-D-glucose metabolic process"/>
    <property type="evidence" value="ECO:0007669"/>
    <property type="project" value="InterPro"/>
</dbReference>
<dbReference type="CDD" id="cd02541">
    <property type="entry name" value="UGPase_prokaryotic"/>
    <property type="match status" value="1"/>
</dbReference>
<dbReference type="Gene3D" id="3.90.550.10">
    <property type="entry name" value="Spore Coat Polysaccharide Biosynthesis Protein SpsA, Chain A"/>
    <property type="match status" value="1"/>
</dbReference>
<dbReference type="InterPro" id="IPR005771">
    <property type="entry name" value="GalU_uridylyltTrfase_bac/arc"/>
</dbReference>
<dbReference type="InterPro" id="IPR005835">
    <property type="entry name" value="NTP_transferase_dom"/>
</dbReference>
<dbReference type="InterPro" id="IPR029044">
    <property type="entry name" value="Nucleotide-diphossugar_trans"/>
</dbReference>
<dbReference type="NCBIfam" id="TIGR01099">
    <property type="entry name" value="galU"/>
    <property type="match status" value="1"/>
</dbReference>
<dbReference type="PANTHER" id="PTHR43197">
    <property type="entry name" value="UTP--GLUCOSE-1-PHOSPHATE URIDYLYLTRANSFERASE"/>
    <property type="match status" value="1"/>
</dbReference>
<dbReference type="PANTHER" id="PTHR43197:SF1">
    <property type="entry name" value="UTP--GLUCOSE-1-PHOSPHATE URIDYLYLTRANSFERASE"/>
    <property type="match status" value="1"/>
</dbReference>
<dbReference type="Pfam" id="PF00483">
    <property type="entry name" value="NTP_transferase"/>
    <property type="match status" value="1"/>
</dbReference>
<dbReference type="SUPFAM" id="SSF53448">
    <property type="entry name" value="Nucleotide-diphospho-sugar transferases"/>
    <property type="match status" value="1"/>
</dbReference>
<protein>
    <recommendedName>
        <fullName>UTP--glucose-1-phosphate uridylyltransferase</fullName>
        <ecNumber>2.7.7.9</ecNumber>
    </recommendedName>
    <alternativeName>
        <fullName>Alpha-D-glucosyl-1-phosphate uridylyltransferase</fullName>
    </alternativeName>
    <alternativeName>
        <fullName>UDP-glucose pyrophosphorylase</fullName>
        <shortName>UDPGP</shortName>
    </alternativeName>
    <alternativeName>
        <fullName>Uridine diphosphoglucose pyrophosphorylase</fullName>
    </alternativeName>
</protein>
<reference key="1">
    <citation type="journal article" date="1996" name="Nucleic Acids Res.">
        <title>Complete sequence analysis of the genome of the bacterium Mycoplasma pneumoniae.</title>
        <authorList>
            <person name="Himmelreich R."/>
            <person name="Hilbert H."/>
            <person name="Plagens H."/>
            <person name="Pirkl E."/>
            <person name="Li B.-C."/>
            <person name="Herrmann R."/>
        </authorList>
    </citation>
    <scope>NUCLEOTIDE SEQUENCE [LARGE SCALE GENOMIC DNA]</scope>
    <source>
        <strain>ATCC 29342 / M129 / Subtype 1</strain>
    </source>
</reference>
<keyword id="KW-0548">Nucleotidyltransferase</keyword>
<keyword id="KW-1185">Reference proteome</keyword>
<keyword id="KW-0808">Transferase</keyword>
<evidence type="ECO:0000250" key="1"/>
<evidence type="ECO:0000305" key="2"/>
<accession>P75124</accession>
<sequence>MPKIRKAVIPAAGLGTRLLPATKAIPKEMLPLVNKPTIQYIVEEAVASGIKEILVIVSSKKEAIIDHFDYDFILENALLQKHKDQEHQEIKDIANLAHIYFVRQKHQHGLGDAILHAKSFVGNEDFAVLLGDDVVFGEQPALAQCIQAYEQTDCQVIGVQEVPHDQVNKYGIVTPEANWQKQALVKILGMVEKPAVNEAKSNLAILSRYILKPSIFTALKQVPFGVGGELQLTDGLNYCLQQGEPFFAKHFGGTRFDVGTKNGFIKANLYTALKTDAITKDEVLAILKEFA</sequence>
<comment type="function">
    <text evidence="1">May play a role in stationary phase survival.</text>
</comment>
<comment type="catalytic activity">
    <reaction>
        <text>alpha-D-glucose 1-phosphate + UTP + H(+) = UDP-alpha-D-glucose + diphosphate</text>
        <dbReference type="Rhea" id="RHEA:19889"/>
        <dbReference type="ChEBI" id="CHEBI:15378"/>
        <dbReference type="ChEBI" id="CHEBI:33019"/>
        <dbReference type="ChEBI" id="CHEBI:46398"/>
        <dbReference type="ChEBI" id="CHEBI:58601"/>
        <dbReference type="ChEBI" id="CHEBI:58885"/>
        <dbReference type="EC" id="2.7.7.9"/>
    </reaction>
</comment>
<comment type="similarity">
    <text evidence="2">Belongs to the UDPGP type 2 family.</text>
</comment>
<feature type="chain" id="PRO_0000201360" description="UTP--glucose-1-phosphate uridylyltransferase">
    <location>
        <begin position="1"/>
        <end position="291"/>
    </location>
</feature>
<gene>
    <name type="primary">galU</name>
    <name type="synonym">gtaB</name>
    <name type="ordered locus">MPN_667</name>
    <name type="ORF">MP175</name>
</gene>
<proteinExistence type="inferred from homology"/>
<name>GALU_MYCPN</name>